<sequence length="275" mass="31789">MNYHVMTLFPDMIHQAMNTSIIGRAMEKGLLTINAIDIREFSEDKHRRVDDYPYGGGAGMVMAPGPVYRTYEHVMKMIDHNKEMLAQDKTMKIPEESVSERKNETRRPRVIYLTPQGKVFHQKMAEEFAKEDDLVFLCGHYEGIDERVLDQIVTDYVSIGDYILTGGELPVMVMMDAISRLIPGVLNNNASAEFESLQDNLLEYPQYTRPEVFMEQKVPDVLLSGHHANIEKWRREQSIIRTLKNRPELLEEAVLSKKEKQFLEQLRLGEDSKNV</sequence>
<protein>
    <recommendedName>
        <fullName evidence="1">tRNA (guanine-N(1)-)-methyltransferase</fullName>
        <ecNumber evidence="1">2.1.1.228</ecNumber>
    </recommendedName>
    <alternativeName>
        <fullName evidence="1">M1G-methyltransferase</fullName>
    </alternativeName>
    <alternativeName>
        <fullName evidence="1">tRNA [GM37] methyltransferase</fullName>
    </alternativeName>
</protein>
<keyword id="KW-0963">Cytoplasm</keyword>
<keyword id="KW-0489">Methyltransferase</keyword>
<keyword id="KW-1185">Reference proteome</keyword>
<keyword id="KW-0949">S-adenosyl-L-methionine</keyword>
<keyword id="KW-0808">Transferase</keyword>
<keyword id="KW-0819">tRNA processing</keyword>
<dbReference type="EC" id="2.1.1.228" evidence="1"/>
<dbReference type="EMBL" id="CP000885">
    <property type="protein sequence ID" value="ABX42766.1"/>
    <property type="molecule type" value="Genomic_DNA"/>
</dbReference>
<dbReference type="RefSeq" id="WP_012200420.1">
    <property type="nucleotide sequence ID" value="NC_010001.1"/>
</dbReference>
<dbReference type="SMR" id="A9KLM2"/>
<dbReference type="STRING" id="357809.Cphy_2405"/>
<dbReference type="KEGG" id="cpy:Cphy_2405"/>
<dbReference type="eggNOG" id="COG0336">
    <property type="taxonomic scope" value="Bacteria"/>
</dbReference>
<dbReference type="HOGENOM" id="CLU_047363_0_1_9"/>
<dbReference type="OrthoDB" id="9807416at2"/>
<dbReference type="Proteomes" id="UP000000370">
    <property type="component" value="Chromosome"/>
</dbReference>
<dbReference type="GO" id="GO:0005829">
    <property type="term" value="C:cytosol"/>
    <property type="evidence" value="ECO:0007669"/>
    <property type="project" value="TreeGrafter"/>
</dbReference>
<dbReference type="GO" id="GO:0052906">
    <property type="term" value="F:tRNA (guanine(37)-N1)-methyltransferase activity"/>
    <property type="evidence" value="ECO:0007669"/>
    <property type="project" value="UniProtKB-UniRule"/>
</dbReference>
<dbReference type="GO" id="GO:0002939">
    <property type="term" value="P:tRNA N1-guanine methylation"/>
    <property type="evidence" value="ECO:0007669"/>
    <property type="project" value="TreeGrafter"/>
</dbReference>
<dbReference type="CDD" id="cd18080">
    <property type="entry name" value="TrmD-like"/>
    <property type="match status" value="1"/>
</dbReference>
<dbReference type="FunFam" id="1.10.1270.20:FF:000001">
    <property type="entry name" value="tRNA (guanine-N(1)-)-methyltransferase"/>
    <property type="match status" value="1"/>
</dbReference>
<dbReference type="Gene3D" id="3.40.1280.10">
    <property type="match status" value="1"/>
</dbReference>
<dbReference type="Gene3D" id="1.10.1270.20">
    <property type="entry name" value="tRNA(m1g37)methyltransferase, domain 2"/>
    <property type="match status" value="1"/>
</dbReference>
<dbReference type="HAMAP" id="MF_00605">
    <property type="entry name" value="TrmD"/>
    <property type="match status" value="1"/>
</dbReference>
<dbReference type="InterPro" id="IPR029028">
    <property type="entry name" value="Alpha/beta_knot_MTases"/>
</dbReference>
<dbReference type="InterPro" id="IPR023148">
    <property type="entry name" value="tRNA_m1G_MeTrfase_C_sf"/>
</dbReference>
<dbReference type="InterPro" id="IPR002649">
    <property type="entry name" value="tRNA_m1G_MeTrfase_TrmD"/>
</dbReference>
<dbReference type="InterPro" id="IPR029026">
    <property type="entry name" value="tRNA_m1G_MTases_N"/>
</dbReference>
<dbReference type="InterPro" id="IPR016009">
    <property type="entry name" value="tRNA_MeTrfase_TRMD/TRM10"/>
</dbReference>
<dbReference type="NCBIfam" id="NF000648">
    <property type="entry name" value="PRK00026.1"/>
    <property type="match status" value="1"/>
</dbReference>
<dbReference type="NCBIfam" id="TIGR00088">
    <property type="entry name" value="trmD"/>
    <property type="match status" value="1"/>
</dbReference>
<dbReference type="PANTHER" id="PTHR46417">
    <property type="entry name" value="TRNA (GUANINE-N(1)-)-METHYLTRANSFERASE"/>
    <property type="match status" value="1"/>
</dbReference>
<dbReference type="PANTHER" id="PTHR46417:SF1">
    <property type="entry name" value="TRNA (GUANINE-N(1)-)-METHYLTRANSFERASE"/>
    <property type="match status" value="1"/>
</dbReference>
<dbReference type="Pfam" id="PF01746">
    <property type="entry name" value="tRNA_m1G_MT"/>
    <property type="match status" value="2"/>
</dbReference>
<dbReference type="PIRSF" id="PIRSF000386">
    <property type="entry name" value="tRNA_mtase"/>
    <property type="match status" value="1"/>
</dbReference>
<dbReference type="SUPFAM" id="SSF75217">
    <property type="entry name" value="alpha/beta knot"/>
    <property type="match status" value="1"/>
</dbReference>
<gene>
    <name evidence="1" type="primary">trmD</name>
    <name type="ordered locus">Cphy_2405</name>
</gene>
<comment type="function">
    <text evidence="1">Specifically methylates guanosine-37 in various tRNAs.</text>
</comment>
<comment type="catalytic activity">
    <reaction evidence="1">
        <text>guanosine(37) in tRNA + S-adenosyl-L-methionine = N(1)-methylguanosine(37) in tRNA + S-adenosyl-L-homocysteine + H(+)</text>
        <dbReference type="Rhea" id="RHEA:36899"/>
        <dbReference type="Rhea" id="RHEA-COMP:10145"/>
        <dbReference type="Rhea" id="RHEA-COMP:10147"/>
        <dbReference type="ChEBI" id="CHEBI:15378"/>
        <dbReference type="ChEBI" id="CHEBI:57856"/>
        <dbReference type="ChEBI" id="CHEBI:59789"/>
        <dbReference type="ChEBI" id="CHEBI:73542"/>
        <dbReference type="ChEBI" id="CHEBI:74269"/>
        <dbReference type="EC" id="2.1.1.228"/>
    </reaction>
</comment>
<comment type="subunit">
    <text evidence="1">Homodimer.</text>
</comment>
<comment type="subcellular location">
    <subcellularLocation>
        <location evidence="1">Cytoplasm</location>
    </subcellularLocation>
</comment>
<comment type="similarity">
    <text evidence="1">Belongs to the RNA methyltransferase TrmD family.</text>
</comment>
<reference key="1">
    <citation type="submission" date="2007-11" db="EMBL/GenBank/DDBJ databases">
        <title>Complete genome sequence of Clostridium phytofermentans ISDg.</title>
        <authorList>
            <person name="Leschine S.B."/>
            <person name="Warnick T.A."/>
            <person name="Blanchard J.L."/>
            <person name="Schnell D.J."/>
            <person name="Petit E.L."/>
            <person name="LaTouf W.G."/>
            <person name="Copeland A."/>
            <person name="Lucas S."/>
            <person name="Lapidus A."/>
            <person name="Barry K."/>
            <person name="Glavina del Rio T."/>
            <person name="Dalin E."/>
            <person name="Tice H."/>
            <person name="Pitluck S."/>
            <person name="Kiss H."/>
            <person name="Brettin T."/>
            <person name="Bruce D."/>
            <person name="Detter J.C."/>
            <person name="Han C."/>
            <person name="Kuske C."/>
            <person name="Schmutz J."/>
            <person name="Larimer F."/>
            <person name="Land M."/>
            <person name="Hauser L."/>
            <person name="Kyrpides N."/>
            <person name="Kim E.A."/>
            <person name="Richardson P."/>
        </authorList>
    </citation>
    <scope>NUCLEOTIDE SEQUENCE [LARGE SCALE GENOMIC DNA]</scope>
    <source>
        <strain>ATCC 700394 / DSM 18823 / ISDg</strain>
    </source>
</reference>
<evidence type="ECO:0000255" key="1">
    <source>
        <dbReference type="HAMAP-Rule" id="MF_00605"/>
    </source>
</evidence>
<organism>
    <name type="scientific">Lachnoclostridium phytofermentans (strain ATCC 700394 / DSM 18823 / ISDg)</name>
    <name type="common">Clostridium phytofermentans</name>
    <dbReference type="NCBI Taxonomy" id="357809"/>
    <lineage>
        <taxon>Bacteria</taxon>
        <taxon>Bacillati</taxon>
        <taxon>Bacillota</taxon>
        <taxon>Clostridia</taxon>
        <taxon>Lachnospirales</taxon>
        <taxon>Lachnospiraceae</taxon>
    </lineage>
</organism>
<name>TRMD_LACP7</name>
<proteinExistence type="inferred from homology"/>
<accession>A9KLM2</accession>
<feature type="chain" id="PRO_1000082513" description="tRNA (guanine-N(1)-)-methyltransferase">
    <location>
        <begin position="1"/>
        <end position="275"/>
    </location>
</feature>
<feature type="binding site" evidence="1">
    <location>
        <position position="139"/>
    </location>
    <ligand>
        <name>S-adenosyl-L-methionine</name>
        <dbReference type="ChEBI" id="CHEBI:59789"/>
    </ligand>
</feature>
<feature type="binding site" evidence="1">
    <location>
        <begin position="159"/>
        <end position="164"/>
    </location>
    <ligand>
        <name>S-adenosyl-L-methionine</name>
        <dbReference type="ChEBI" id="CHEBI:59789"/>
    </ligand>
</feature>